<feature type="chain" id="PRO_0000240893" description="Cysteine--tRNA ligase">
    <location>
        <begin position="1"/>
        <end position="506"/>
    </location>
</feature>
<feature type="short sequence motif" description="'HIGH' region">
    <location>
        <begin position="36"/>
        <end position="46"/>
    </location>
</feature>
<feature type="short sequence motif" description="'KMSKS' region">
    <location>
        <begin position="302"/>
        <end position="306"/>
    </location>
</feature>
<feature type="binding site" evidence="1">
    <location>
        <position position="34"/>
    </location>
    <ligand>
        <name>Zn(2+)</name>
        <dbReference type="ChEBI" id="CHEBI:29105"/>
    </ligand>
</feature>
<feature type="binding site" evidence="1">
    <location>
        <position position="230"/>
    </location>
    <ligand>
        <name>Zn(2+)</name>
        <dbReference type="ChEBI" id="CHEBI:29105"/>
    </ligand>
</feature>
<feature type="binding site" evidence="1">
    <location>
        <position position="269"/>
    </location>
    <ligand>
        <name>Zn(2+)</name>
        <dbReference type="ChEBI" id="CHEBI:29105"/>
    </ligand>
</feature>
<feature type="binding site" evidence="1">
    <location>
        <position position="273"/>
    </location>
    <ligand>
        <name>Zn(2+)</name>
        <dbReference type="ChEBI" id="CHEBI:29105"/>
    </ligand>
</feature>
<feature type="binding site" evidence="1">
    <location>
        <position position="305"/>
    </location>
    <ligand>
        <name>ATP</name>
        <dbReference type="ChEBI" id="CHEBI:30616"/>
    </ligand>
</feature>
<reference key="1">
    <citation type="journal article" date="2005" name="J. Bacteriol.">
        <title>Completion of the genome sequence of Brucella abortus and comparison to the highly similar genomes of Brucella melitensis and Brucella suis.</title>
        <authorList>
            <person name="Halling S.M."/>
            <person name="Peterson-Burch B.D."/>
            <person name="Bricker B.J."/>
            <person name="Zuerner R.L."/>
            <person name="Qing Z."/>
            <person name="Li L.-L."/>
            <person name="Kapur V."/>
            <person name="Alt D.P."/>
            <person name="Olsen S.C."/>
        </authorList>
    </citation>
    <scope>NUCLEOTIDE SEQUENCE [LARGE SCALE GENOMIC DNA]</scope>
    <source>
        <strain>9-941</strain>
    </source>
</reference>
<evidence type="ECO:0000255" key="1">
    <source>
        <dbReference type="HAMAP-Rule" id="MF_00041"/>
    </source>
</evidence>
<proteinExistence type="inferred from homology"/>
<keyword id="KW-0030">Aminoacyl-tRNA synthetase</keyword>
<keyword id="KW-0067">ATP-binding</keyword>
<keyword id="KW-0963">Cytoplasm</keyword>
<keyword id="KW-0436">Ligase</keyword>
<keyword id="KW-0479">Metal-binding</keyword>
<keyword id="KW-0547">Nucleotide-binding</keyword>
<keyword id="KW-0648">Protein biosynthesis</keyword>
<keyword id="KW-0862">Zinc</keyword>
<gene>
    <name evidence="1" type="primary">cysS</name>
    <name type="ordered locus">BruAb1_0694</name>
</gene>
<protein>
    <recommendedName>
        <fullName evidence="1">Cysteine--tRNA ligase</fullName>
        <ecNumber evidence="1">6.1.1.16</ecNumber>
    </recommendedName>
    <alternativeName>
        <fullName evidence="1">Cysteinyl-tRNA synthetase</fullName>
        <shortName evidence="1">CysRS</shortName>
    </alternativeName>
</protein>
<comment type="catalytic activity">
    <reaction evidence="1">
        <text>tRNA(Cys) + L-cysteine + ATP = L-cysteinyl-tRNA(Cys) + AMP + diphosphate</text>
        <dbReference type="Rhea" id="RHEA:17773"/>
        <dbReference type="Rhea" id="RHEA-COMP:9661"/>
        <dbReference type="Rhea" id="RHEA-COMP:9679"/>
        <dbReference type="ChEBI" id="CHEBI:30616"/>
        <dbReference type="ChEBI" id="CHEBI:33019"/>
        <dbReference type="ChEBI" id="CHEBI:35235"/>
        <dbReference type="ChEBI" id="CHEBI:78442"/>
        <dbReference type="ChEBI" id="CHEBI:78517"/>
        <dbReference type="ChEBI" id="CHEBI:456215"/>
        <dbReference type="EC" id="6.1.1.16"/>
    </reaction>
</comment>
<comment type="cofactor">
    <cofactor evidence="1">
        <name>Zn(2+)</name>
        <dbReference type="ChEBI" id="CHEBI:29105"/>
    </cofactor>
    <text evidence="1">Binds 1 zinc ion per subunit.</text>
</comment>
<comment type="subunit">
    <text evidence="1">Monomer.</text>
</comment>
<comment type="subcellular location">
    <subcellularLocation>
        <location evidence="1">Cytoplasm</location>
    </subcellularLocation>
</comment>
<comment type="similarity">
    <text evidence="1">Belongs to the class-I aminoacyl-tRNA synthetase family.</text>
</comment>
<name>SYC_BRUAB</name>
<organism>
    <name type="scientific">Brucella abortus biovar 1 (strain 9-941)</name>
    <dbReference type="NCBI Taxonomy" id="262698"/>
    <lineage>
        <taxon>Bacteria</taxon>
        <taxon>Pseudomonadati</taxon>
        <taxon>Pseudomonadota</taxon>
        <taxon>Alphaproteobacteria</taxon>
        <taxon>Hyphomicrobiales</taxon>
        <taxon>Brucellaceae</taxon>
        <taxon>Brucella/Ochrobactrum group</taxon>
        <taxon>Brucella</taxon>
    </lineage>
</organism>
<sequence length="506" mass="56284">MPDTTPQLRLYNTLTRTKEAFAPIDAKNVRMYVCGPTVYDFAHIGNARPVIVFDVLFRLLRHVYGAQHVTYARNITDVDDKINARAARDYPDLPFNEAIRKVTESTNAQFQADVTALGNLQPTVQPRATEHMDEMRAMIDRLVQRGVAYVAQDHVLFSPSAMNARKGPRYGALARRSLDEMLAGARVDVASYKRDEMDFVLWKPSKKGEPGWPSPAGIETLGRPGWHIECSAMSMAKLLEPFGGGLKCDDPERNQFDIHGGGIDLVFPHHENEIAQSCCALGTERMANIWMHNGFLQVEGQKMSKSLGNFITIRDVLNDGLPQLGEWGDNTVRDHWAGLAARLSMLQTHYREPINWTAQRLAESADELHRWYGLLRDEGFGAPEKLSHASAVAAALCDDLNSWAAITALRQAFKVRDVAALGEGMALMGLLDPYFVTASDVPIFARADVDASAIAARIAERLNFINAKNWAEADRIRDELLQEGVQLKDSKDPATGERITTWDVVG</sequence>
<accession>Q57E65</accession>
<dbReference type="EC" id="6.1.1.16" evidence="1"/>
<dbReference type="EMBL" id="AE017223">
    <property type="protein sequence ID" value="AAX74069.1"/>
    <property type="molecule type" value="Genomic_DNA"/>
</dbReference>
<dbReference type="RefSeq" id="WP_002966736.1">
    <property type="nucleotide sequence ID" value="NC_006932.1"/>
</dbReference>
<dbReference type="SMR" id="Q57E65"/>
<dbReference type="EnsemblBacteria" id="AAX74069">
    <property type="protein sequence ID" value="AAX74069"/>
    <property type="gene ID" value="BruAb1_0694"/>
</dbReference>
<dbReference type="GeneID" id="93016919"/>
<dbReference type="KEGG" id="bmb:BruAb1_0694"/>
<dbReference type="HOGENOM" id="CLU_013528_0_1_5"/>
<dbReference type="Proteomes" id="UP000000540">
    <property type="component" value="Chromosome I"/>
</dbReference>
<dbReference type="GO" id="GO:0005829">
    <property type="term" value="C:cytosol"/>
    <property type="evidence" value="ECO:0007669"/>
    <property type="project" value="TreeGrafter"/>
</dbReference>
<dbReference type="GO" id="GO:0005524">
    <property type="term" value="F:ATP binding"/>
    <property type="evidence" value="ECO:0007669"/>
    <property type="project" value="UniProtKB-UniRule"/>
</dbReference>
<dbReference type="GO" id="GO:0004817">
    <property type="term" value="F:cysteine-tRNA ligase activity"/>
    <property type="evidence" value="ECO:0007669"/>
    <property type="project" value="UniProtKB-UniRule"/>
</dbReference>
<dbReference type="GO" id="GO:0008270">
    <property type="term" value="F:zinc ion binding"/>
    <property type="evidence" value="ECO:0007669"/>
    <property type="project" value="UniProtKB-UniRule"/>
</dbReference>
<dbReference type="GO" id="GO:0006423">
    <property type="term" value="P:cysteinyl-tRNA aminoacylation"/>
    <property type="evidence" value="ECO:0007669"/>
    <property type="project" value="UniProtKB-UniRule"/>
</dbReference>
<dbReference type="CDD" id="cd00672">
    <property type="entry name" value="CysRS_core"/>
    <property type="match status" value="1"/>
</dbReference>
<dbReference type="Gene3D" id="1.20.120.1910">
    <property type="entry name" value="Cysteine-tRNA ligase, C-terminal anti-codon recognition domain"/>
    <property type="match status" value="1"/>
</dbReference>
<dbReference type="Gene3D" id="3.40.50.620">
    <property type="entry name" value="HUPs"/>
    <property type="match status" value="1"/>
</dbReference>
<dbReference type="HAMAP" id="MF_00041">
    <property type="entry name" value="Cys_tRNA_synth"/>
    <property type="match status" value="1"/>
</dbReference>
<dbReference type="InterPro" id="IPR015803">
    <property type="entry name" value="Cys-tRNA-ligase"/>
</dbReference>
<dbReference type="InterPro" id="IPR024909">
    <property type="entry name" value="Cys-tRNA/MSH_ligase"/>
</dbReference>
<dbReference type="InterPro" id="IPR014729">
    <property type="entry name" value="Rossmann-like_a/b/a_fold"/>
</dbReference>
<dbReference type="InterPro" id="IPR032678">
    <property type="entry name" value="tRNA-synt_1_cat_dom"/>
</dbReference>
<dbReference type="InterPro" id="IPR009080">
    <property type="entry name" value="tRNAsynth_Ia_anticodon-bd"/>
</dbReference>
<dbReference type="NCBIfam" id="TIGR00435">
    <property type="entry name" value="cysS"/>
    <property type="match status" value="1"/>
</dbReference>
<dbReference type="PANTHER" id="PTHR10890:SF3">
    <property type="entry name" value="CYSTEINE--TRNA LIGASE, CYTOPLASMIC"/>
    <property type="match status" value="1"/>
</dbReference>
<dbReference type="PANTHER" id="PTHR10890">
    <property type="entry name" value="CYSTEINYL-TRNA SYNTHETASE"/>
    <property type="match status" value="1"/>
</dbReference>
<dbReference type="Pfam" id="PF01406">
    <property type="entry name" value="tRNA-synt_1e"/>
    <property type="match status" value="1"/>
</dbReference>
<dbReference type="PRINTS" id="PR00983">
    <property type="entry name" value="TRNASYNTHCYS"/>
</dbReference>
<dbReference type="SUPFAM" id="SSF47323">
    <property type="entry name" value="Anticodon-binding domain of a subclass of class I aminoacyl-tRNA synthetases"/>
    <property type="match status" value="1"/>
</dbReference>
<dbReference type="SUPFAM" id="SSF52374">
    <property type="entry name" value="Nucleotidylyl transferase"/>
    <property type="match status" value="1"/>
</dbReference>